<feature type="chain" id="PRO_0000358309" description="NAD(P)H-quinone oxidoreductase subunit J, chloroplastic">
    <location>
        <begin position="1"/>
        <end position="169"/>
    </location>
</feature>
<protein>
    <recommendedName>
        <fullName evidence="1">NAD(P)H-quinone oxidoreductase subunit J, chloroplastic</fullName>
        <ecNumber evidence="1">7.1.1.-</ecNumber>
    </recommendedName>
    <alternativeName>
        <fullName>NAD(P)H dehydrogenase subunit J</fullName>
    </alternativeName>
    <alternativeName>
        <fullName evidence="1">NADH-plastoquinone oxidoreductase subunit J</fullName>
    </alternativeName>
</protein>
<proteinExistence type="inferred from homology"/>
<evidence type="ECO:0000255" key="1">
    <source>
        <dbReference type="HAMAP-Rule" id="MF_01357"/>
    </source>
</evidence>
<geneLocation type="chloroplast"/>
<gene>
    <name evidence="1" type="primary">ndhJ</name>
</gene>
<comment type="function">
    <text evidence="1">NDH shuttles electrons from NAD(P)H:plastoquinone, via FMN and iron-sulfur (Fe-S) centers, to quinones in the photosynthetic chain and possibly in a chloroplast respiratory chain. The immediate electron acceptor for the enzyme in this species is believed to be plastoquinone. Couples the redox reaction to proton translocation, and thus conserves the redox energy in a proton gradient.</text>
</comment>
<comment type="catalytic activity">
    <reaction evidence="1">
        <text>a plastoquinone + NADH + (n+1) H(+)(in) = a plastoquinol + NAD(+) + n H(+)(out)</text>
        <dbReference type="Rhea" id="RHEA:42608"/>
        <dbReference type="Rhea" id="RHEA-COMP:9561"/>
        <dbReference type="Rhea" id="RHEA-COMP:9562"/>
        <dbReference type="ChEBI" id="CHEBI:15378"/>
        <dbReference type="ChEBI" id="CHEBI:17757"/>
        <dbReference type="ChEBI" id="CHEBI:57540"/>
        <dbReference type="ChEBI" id="CHEBI:57945"/>
        <dbReference type="ChEBI" id="CHEBI:62192"/>
    </reaction>
</comment>
<comment type="catalytic activity">
    <reaction evidence="1">
        <text>a plastoquinone + NADPH + (n+1) H(+)(in) = a plastoquinol + NADP(+) + n H(+)(out)</text>
        <dbReference type="Rhea" id="RHEA:42612"/>
        <dbReference type="Rhea" id="RHEA-COMP:9561"/>
        <dbReference type="Rhea" id="RHEA-COMP:9562"/>
        <dbReference type="ChEBI" id="CHEBI:15378"/>
        <dbReference type="ChEBI" id="CHEBI:17757"/>
        <dbReference type="ChEBI" id="CHEBI:57783"/>
        <dbReference type="ChEBI" id="CHEBI:58349"/>
        <dbReference type="ChEBI" id="CHEBI:62192"/>
    </reaction>
</comment>
<comment type="subunit">
    <text evidence="1">NDH is composed of at least 16 different subunits, 5 of which are encoded in the nucleus.</text>
</comment>
<comment type="subcellular location">
    <subcellularLocation>
        <location evidence="1">Plastid</location>
        <location evidence="1">Chloroplast thylakoid membrane</location>
        <topology evidence="1">Peripheral membrane protein</topology>
        <orientation evidence="1">Stromal side</orientation>
    </subcellularLocation>
</comment>
<comment type="similarity">
    <text evidence="1">Belongs to the complex I 30 kDa subunit family.</text>
</comment>
<keyword id="KW-0150">Chloroplast</keyword>
<keyword id="KW-0472">Membrane</keyword>
<keyword id="KW-0520">NAD</keyword>
<keyword id="KW-0521">NADP</keyword>
<keyword id="KW-0934">Plastid</keyword>
<keyword id="KW-0618">Plastoquinone</keyword>
<keyword id="KW-0874">Quinone</keyword>
<keyword id="KW-0793">Thylakoid</keyword>
<keyword id="KW-1278">Translocase</keyword>
<keyword id="KW-0813">Transport</keyword>
<name>NDHJ_ZYGCR</name>
<organism>
    <name type="scientific">Zygnema circumcarinatum</name>
    <name type="common">Green alga</name>
    <dbReference type="NCBI Taxonomy" id="35869"/>
    <lineage>
        <taxon>Eukaryota</taxon>
        <taxon>Viridiplantae</taxon>
        <taxon>Streptophyta</taxon>
        <taxon>Zygnematophyceae</taxon>
        <taxon>Zygnematophycidae</taxon>
        <taxon>Zygnematales</taxon>
        <taxon>Zygnemataceae</taxon>
        <taxon>Zygnema</taxon>
    </lineage>
</organism>
<dbReference type="EC" id="7.1.1.-" evidence="1"/>
<dbReference type="EMBL" id="AY958086">
    <property type="protein sequence ID" value="AAX45821.1"/>
    <property type="molecule type" value="Genomic_DNA"/>
</dbReference>
<dbReference type="RefSeq" id="YP_636542.1">
    <property type="nucleotide sequence ID" value="NC_008117.1"/>
</dbReference>
<dbReference type="SMR" id="Q32RI4"/>
<dbReference type="GeneID" id="4108141"/>
<dbReference type="GO" id="GO:0009535">
    <property type="term" value="C:chloroplast thylakoid membrane"/>
    <property type="evidence" value="ECO:0007669"/>
    <property type="project" value="UniProtKB-SubCell"/>
</dbReference>
<dbReference type="GO" id="GO:0008137">
    <property type="term" value="F:NADH dehydrogenase (ubiquinone) activity"/>
    <property type="evidence" value="ECO:0007669"/>
    <property type="project" value="InterPro"/>
</dbReference>
<dbReference type="GO" id="GO:0048038">
    <property type="term" value="F:quinone binding"/>
    <property type="evidence" value="ECO:0007669"/>
    <property type="project" value="UniProtKB-KW"/>
</dbReference>
<dbReference type="GO" id="GO:0019684">
    <property type="term" value="P:photosynthesis, light reaction"/>
    <property type="evidence" value="ECO:0007669"/>
    <property type="project" value="UniProtKB-UniRule"/>
</dbReference>
<dbReference type="Gene3D" id="3.30.460.80">
    <property type="entry name" value="NADH:ubiquinone oxidoreductase, 30kDa subunit"/>
    <property type="match status" value="1"/>
</dbReference>
<dbReference type="HAMAP" id="MF_01357">
    <property type="entry name" value="NDH1_NuoC"/>
    <property type="match status" value="1"/>
</dbReference>
<dbReference type="InterPro" id="IPR010218">
    <property type="entry name" value="NADH_DH_suC"/>
</dbReference>
<dbReference type="InterPro" id="IPR037232">
    <property type="entry name" value="NADH_quin_OxRdtase_su_C/D-like"/>
</dbReference>
<dbReference type="InterPro" id="IPR001268">
    <property type="entry name" value="NADH_UbQ_OxRdtase_30kDa_su"/>
</dbReference>
<dbReference type="InterPro" id="IPR020396">
    <property type="entry name" value="NADH_UbQ_OxRdtase_CS"/>
</dbReference>
<dbReference type="NCBIfam" id="NF009141">
    <property type="entry name" value="PRK12494.1"/>
    <property type="match status" value="1"/>
</dbReference>
<dbReference type="PANTHER" id="PTHR10884:SF14">
    <property type="entry name" value="NADH DEHYDROGENASE [UBIQUINONE] IRON-SULFUR PROTEIN 3, MITOCHONDRIAL"/>
    <property type="match status" value="1"/>
</dbReference>
<dbReference type="PANTHER" id="PTHR10884">
    <property type="entry name" value="NADH DEHYDROGENASE UBIQUINONE IRON-SULFUR PROTEIN 3"/>
    <property type="match status" value="1"/>
</dbReference>
<dbReference type="Pfam" id="PF00329">
    <property type="entry name" value="Complex1_30kDa"/>
    <property type="match status" value="1"/>
</dbReference>
<dbReference type="SUPFAM" id="SSF143243">
    <property type="entry name" value="Nqo5-like"/>
    <property type="match status" value="1"/>
</dbReference>
<dbReference type="PROSITE" id="PS00542">
    <property type="entry name" value="COMPLEX1_30K"/>
    <property type="match status" value="1"/>
</dbReference>
<sequence>MTNLAFQSSSQIQGRLSAWLVTHKLPHRPLGFDYQGVETIEVRPEDWPSVAVALYVYGFNYLRCQCAYDVAPGGALASVYHLTKVEDVADQPEELCVKLFVSRNNPSVPSSFWIWKSADFQERECYDMFGIVYKNHPHLKRILMPESWLGWPLRKDYITPDFYELQDAY</sequence>
<accession>Q32RI4</accession>
<reference key="1">
    <citation type="journal article" date="2005" name="BMC Biol.">
        <title>The complete chloroplast DNA sequences of the charophycean green algae Staurastrum and Zygnema reveal that the chloroplast genome underwent extensive changes during the evolution of the Zygnematales.</title>
        <authorList>
            <person name="Turmel M."/>
            <person name="Otis C."/>
            <person name="Lemieux C."/>
        </authorList>
    </citation>
    <scope>NUCLEOTIDE SEQUENCE [LARGE SCALE GENOMIC DNA]</scope>
</reference>